<sequence length="377" mass="40888">MKRVINSCIAVLLGVAVMSAVIVLCSENPSVSLAAFFLKPFSTRGYIRALFHKAGLFVCMALGASCALKTGMINLGGDGQIYAAGFVTALLLREYWGVGFLLQWSVALLCALSVAGILACVSGILKAWLATSEMITSFLLSTACVPLIDALIITVTRDPAGNLLATAPVHSHFILQQQTSLFGVPAVLTYASLVALAVGCFFSYTRVGYQFRICGKAPEFGRFVGFPVWATYVWGMVLSGALFGLTGFFSVVGLFGTCYVGFSVGMGYAALAHALIAHAHITVLVPLAFFFAWMETASEAAVLGAHLTVNVVLFLQAAIFLLISAQWSAPWNAVRRGARRVYRFLVTVFCFRGEKHRTRRRHALSVHDTHHRRSRWE</sequence>
<gene>
    <name evidence="2" type="primary">rfuC</name>
    <name evidence="5" type="ordered locus">TP_0301</name>
    <name evidence="6" type="ORF">TPANIC_0301</name>
</gene>
<evidence type="ECO:0000255" key="1"/>
<evidence type="ECO:0000303" key="2">
    <source>
    </source>
</evidence>
<evidence type="ECO:0000305" key="3"/>
<evidence type="ECO:0000305" key="4">
    <source>
    </source>
</evidence>
<evidence type="ECO:0000312" key="5">
    <source>
        <dbReference type="EMBL" id="AAC65289.1"/>
    </source>
</evidence>
<evidence type="ECO:0000312" key="6">
    <source>
        <dbReference type="EMBL" id="AGN75505.1"/>
    </source>
</evidence>
<reference key="1">
    <citation type="journal article" date="1998" name="Science">
        <title>Complete genome sequence of Treponema pallidum, the syphilis spirochete.</title>
        <authorList>
            <person name="Fraser C.M."/>
            <person name="Norris S.J."/>
            <person name="Weinstock G.M."/>
            <person name="White O."/>
            <person name="Sutton G.G."/>
            <person name="Dodson R.J."/>
            <person name="Gwinn M.L."/>
            <person name="Hickey E.K."/>
            <person name="Clayton R.A."/>
            <person name="Ketchum K.A."/>
            <person name="Sodergren E."/>
            <person name="Hardham J.M."/>
            <person name="McLeod M.P."/>
            <person name="Salzberg S.L."/>
            <person name="Peterson J.D."/>
            <person name="Khalak H.G."/>
            <person name="Richardson D.L."/>
            <person name="Howell J.K."/>
            <person name="Chidambaram M."/>
            <person name="Utterback T.R."/>
            <person name="McDonald L.A."/>
            <person name="Artiach P."/>
            <person name="Bowman C."/>
            <person name="Cotton M.D."/>
            <person name="Fujii C."/>
            <person name="Garland S.A."/>
            <person name="Hatch B."/>
            <person name="Horst K."/>
            <person name="Roberts K.M."/>
            <person name="Sandusky M."/>
            <person name="Weidman J.F."/>
            <person name="Smith H.O."/>
            <person name="Venter J.C."/>
        </authorList>
    </citation>
    <scope>NUCLEOTIDE SEQUENCE [LARGE SCALE GENOMIC DNA]</scope>
    <source>
        <strain>Nichols</strain>
    </source>
</reference>
<reference key="2">
    <citation type="journal article" date="2013" name="PLoS ONE">
        <title>Resequencing of Treponema pallidum ssp. pallidum strains Nichols and SS14: correction of sequencing errors resulted in increased separation of syphilis treponeme subclusters.</title>
        <authorList>
            <person name="Petrosova H."/>
            <person name="Pospisilova P."/>
            <person name="Strouhal M."/>
            <person name="Cejkova D."/>
            <person name="Zobanikova M."/>
            <person name="Mikalova L."/>
            <person name="Sodergren E."/>
            <person name="Weinstock G.M."/>
            <person name="Smajs D."/>
        </authorList>
    </citation>
    <scope>NUCLEOTIDE SEQUENCE [LARGE SCALE GENOMIC DNA]</scope>
    <source>
        <strain>Nichols</strain>
    </source>
</reference>
<reference key="3">
    <citation type="journal article" date="2013" name="MBio">
        <title>Evidence for an ABC-type riboflavin transporter system in pathogenic spirochetes.</title>
        <authorList>
            <person name="Deka R.K."/>
            <person name="Brautigam C.A."/>
            <person name="Biddy B.A."/>
            <person name="Liu W.Z."/>
            <person name="Norgard M.V."/>
        </authorList>
    </citation>
    <scope>FUNCTION</scope>
    <scope>SUBUNIT</scope>
    <scope>SUBCELLULAR LOCATION</scope>
</reference>
<comment type="function">
    <text evidence="4">Probably part of the ABC transporter complex RfuABCD involved in riboflavin import. Probably responsible for the translocation of the substrate across the membrane.</text>
</comment>
<comment type="subunit">
    <text evidence="4">The complex is probably composed of two ATP-binding proteins (RfuB), two transmembrane proteins (RfuC and RfuD) and a solute-binding protein (RfuA).</text>
</comment>
<comment type="subcellular location">
    <subcellularLocation>
        <location evidence="4">Cell inner membrane</location>
        <topology evidence="1">Multi-pass membrane protein</topology>
    </subcellularLocation>
</comment>
<comment type="similarity">
    <text evidence="3">Belongs to the binding-protein-dependent transport system permease family.</text>
</comment>
<feature type="chain" id="PRO_0000443720" description="Probable riboflavin import permease protein RfuC">
    <location>
        <begin position="1"/>
        <end position="377"/>
    </location>
</feature>
<feature type="transmembrane region" description="Helical" evidence="1">
    <location>
        <begin position="4"/>
        <end position="24"/>
    </location>
</feature>
<feature type="transmembrane region" description="Helical" evidence="1">
    <location>
        <begin position="49"/>
        <end position="69"/>
    </location>
</feature>
<feature type="transmembrane region" description="Helical" evidence="1">
    <location>
        <begin position="72"/>
        <end position="92"/>
    </location>
</feature>
<feature type="transmembrane region" description="Helical" evidence="1">
    <location>
        <begin position="98"/>
        <end position="118"/>
    </location>
</feature>
<feature type="transmembrane region" description="Helical" evidence="1">
    <location>
        <begin position="135"/>
        <end position="155"/>
    </location>
</feature>
<feature type="transmembrane region" description="Helical" evidence="1">
    <location>
        <begin position="182"/>
        <end position="202"/>
    </location>
</feature>
<feature type="transmembrane region" description="Helical" evidence="1">
    <location>
        <begin position="223"/>
        <end position="245"/>
    </location>
</feature>
<feature type="transmembrane region" description="Helical" evidence="1">
    <location>
        <begin position="249"/>
        <end position="268"/>
    </location>
</feature>
<feature type="transmembrane region" description="Helical" evidence="1">
    <location>
        <begin position="274"/>
        <end position="294"/>
    </location>
</feature>
<feature type="transmembrane region" description="Helical" evidence="1">
    <location>
        <begin position="303"/>
        <end position="323"/>
    </location>
</feature>
<dbReference type="EMBL" id="AE000520">
    <property type="protein sequence ID" value="AAC65289.1"/>
    <property type="molecule type" value="Genomic_DNA"/>
</dbReference>
<dbReference type="EMBL" id="CP004010">
    <property type="protein sequence ID" value="AGN75505.1"/>
    <property type="molecule type" value="Genomic_DNA"/>
</dbReference>
<dbReference type="PIR" id="G71341">
    <property type="entry name" value="G71341"/>
</dbReference>
<dbReference type="RefSeq" id="WP_010881750.1">
    <property type="nucleotide sequence ID" value="NC_021490.2"/>
</dbReference>
<dbReference type="IntAct" id="O83323">
    <property type="interactions" value="2"/>
</dbReference>
<dbReference type="STRING" id="243276.TP_0301"/>
<dbReference type="TCDB" id="3.A.1.2.28">
    <property type="family name" value="the atp-binding cassette (abc) superfamily"/>
</dbReference>
<dbReference type="EnsemblBacteria" id="AAC65289">
    <property type="protein sequence ID" value="AAC65289"/>
    <property type="gene ID" value="TP_0301"/>
</dbReference>
<dbReference type="GeneID" id="93876087"/>
<dbReference type="KEGG" id="tpa:TP_0301"/>
<dbReference type="KEGG" id="tpw:TPANIC_0301"/>
<dbReference type="PATRIC" id="fig|243276.9.peg.301"/>
<dbReference type="eggNOG" id="COG4603">
    <property type="taxonomic scope" value="Bacteria"/>
</dbReference>
<dbReference type="HOGENOM" id="CLU_040769_0_3_12"/>
<dbReference type="OrthoDB" id="350196at2"/>
<dbReference type="Proteomes" id="UP000000811">
    <property type="component" value="Chromosome"/>
</dbReference>
<dbReference type="GO" id="GO:0005886">
    <property type="term" value="C:plasma membrane"/>
    <property type="evidence" value="ECO:0007669"/>
    <property type="project" value="UniProtKB-SubCell"/>
</dbReference>
<dbReference type="GO" id="GO:0022857">
    <property type="term" value="F:transmembrane transporter activity"/>
    <property type="evidence" value="ECO:0007669"/>
    <property type="project" value="InterPro"/>
</dbReference>
<dbReference type="CDD" id="cd06580">
    <property type="entry name" value="TM_PBP1_transp_TpRbsC_like"/>
    <property type="match status" value="1"/>
</dbReference>
<dbReference type="InterPro" id="IPR001851">
    <property type="entry name" value="ABC_transp_permease"/>
</dbReference>
<dbReference type="PANTHER" id="PTHR47089">
    <property type="entry name" value="ABC TRANSPORTER, PERMEASE PROTEIN"/>
    <property type="match status" value="1"/>
</dbReference>
<dbReference type="PANTHER" id="PTHR47089:SF1">
    <property type="entry name" value="GUANOSINE ABC TRANSPORTER PERMEASE PROTEIN NUPP"/>
    <property type="match status" value="1"/>
</dbReference>
<dbReference type="Pfam" id="PF02653">
    <property type="entry name" value="BPD_transp_2"/>
    <property type="match status" value="1"/>
</dbReference>
<protein>
    <recommendedName>
        <fullName evidence="3">Probable riboflavin import permease protein RfuC</fullName>
    </recommendedName>
</protein>
<keyword id="KW-0997">Cell inner membrane</keyword>
<keyword id="KW-1003">Cell membrane</keyword>
<keyword id="KW-0472">Membrane</keyword>
<keyword id="KW-1185">Reference proteome</keyword>
<keyword id="KW-0812">Transmembrane</keyword>
<keyword id="KW-1133">Transmembrane helix</keyword>
<keyword id="KW-0813">Transport</keyword>
<accession>O83323</accession>
<organism>
    <name type="scientific">Treponema pallidum (strain Nichols)</name>
    <dbReference type="NCBI Taxonomy" id="243276"/>
    <lineage>
        <taxon>Bacteria</taxon>
        <taxon>Pseudomonadati</taxon>
        <taxon>Spirochaetota</taxon>
        <taxon>Spirochaetia</taxon>
        <taxon>Spirochaetales</taxon>
        <taxon>Treponemataceae</taxon>
        <taxon>Treponema</taxon>
    </lineage>
</organism>
<name>RFUC_TREPA</name>
<proteinExistence type="evidence at protein level"/>